<feature type="chain" id="PRO_0000355214" description="Probable helicase A859L">
    <location>
        <begin position="1"/>
        <end position="859"/>
    </location>
</feature>
<feature type="domain" description="Helicase ATP-binding" evidence="1">
    <location>
        <begin position="178"/>
        <end position="349"/>
    </location>
</feature>
<feature type="domain" description="Helicase C-terminal" evidence="2">
    <location>
        <begin position="401"/>
        <end position="553"/>
    </location>
</feature>
<feature type="short sequence motif" description="DEAH box">
    <location>
        <begin position="298"/>
        <end position="301"/>
    </location>
</feature>
<feature type="binding site" evidence="1">
    <location>
        <begin position="191"/>
        <end position="198"/>
    </location>
    <ligand>
        <name>ATP</name>
        <dbReference type="ChEBI" id="CHEBI:30616"/>
    </ligand>
</feature>
<organism>
    <name type="scientific">African swine fever virus (isolate Tick/South Africa/Pretoriuskop Pr4/1996)</name>
    <name type="common">ASFV</name>
    <dbReference type="NCBI Taxonomy" id="561443"/>
    <lineage>
        <taxon>Viruses</taxon>
        <taxon>Varidnaviria</taxon>
        <taxon>Bamfordvirae</taxon>
        <taxon>Nucleocytoviricota</taxon>
        <taxon>Pokkesviricetes</taxon>
        <taxon>Asfuvirales</taxon>
        <taxon>Asfarviridae</taxon>
        <taxon>Asfivirus</taxon>
        <taxon>African swine fever virus</taxon>
    </lineage>
</organism>
<proteinExistence type="inferred from homology"/>
<keyword id="KW-0067">ATP-binding</keyword>
<keyword id="KW-0347">Helicase</keyword>
<keyword id="KW-0378">Hydrolase</keyword>
<keyword id="KW-0547">Nucleotide-binding</keyword>
<comment type="similarity">
    <text evidence="3">Belongs to the asfivirus helicase A859L family.</text>
</comment>
<accession>P0C8H2</accession>
<gene>
    <name type="ordered locus">Pret-052</name>
</gene>
<name>VF859_ASFP4</name>
<protein>
    <recommendedName>
        <fullName>Probable helicase A859L</fullName>
        <ecNumber>3.6.4.-</ecNumber>
    </recommendedName>
</protein>
<dbReference type="EC" id="3.6.4.-"/>
<dbReference type="EMBL" id="AY261363">
    <property type="status" value="NOT_ANNOTATED_CDS"/>
    <property type="molecule type" value="Genomic_DNA"/>
</dbReference>
<dbReference type="SMR" id="P0C8H2"/>
<dbReference type="Proteomes" id="UP000000859">
    <property type="component" value="Segment"/>
</dbReference>
<dbReference type="GO" id="GO:0005524">
    <property type="term" value="F:ATP binding"/>
    <property type="evidence" value="ECO:0007669"/>
    <property type="project" value="UniProtKB-KW"/>
</dbReference>
<dbReference type="GO" id="GO:0003677">
    <property type="term" value="F:DNA binding"/>
    <property type="evidence" value="ECO:0007669"/>
    <property type="project" value="InterPro"/>
</dbReference>
<dbReference type="GO" id="GO:0004386">
    <property type="term" value="F:helicase activity"/>
    <property type="evidence" value="ECO:0007669"/>
    <property type="project" value="UniProtKB-KW"/>
</dbReference>
<dbReference type="GO" id="GO:0016787">
    <property type="term" value="F:hydrolase activity"/>
    <property type="evidence" value="ECO:0007669"/>
    <property type="project" value="UniProtKB-KW"/>
</dbReference>
<dbReference type="Gene3D" id="3.40.50.300">
    <property type="entry name" value="P-loop containing nucleotide triphosphate hydrolases"/>
    <property type="match status" value="2"/>
</dbReference>
<dbReference type="InterPro" id="IPR006935">
    <property type="entry name" value="Helicase/UvrB_N"/>
</dbReference>
<dbReference type="InterPro" id="IPR014001">
    <property type="entry name" value="Helicase_ATP-bd"/>
</dbReference>
<dbReference type="InterPro" id="IPR001650">
    <property type="entry name" value="Helicase_C-like"/>
</dbReference>
<dbReference type="InterPro" id="IPR050742">
    <property type="entry name" value="Helicase_Restrict-Modif_Enz"/>
</dbReference>
<dbReference type="InterPro" id="IPR027417">
    <property type="entry name" value="P-loop_NTPase"/>
</dbReference>
<dbReference type="InterPro" id="IPR018306">
    <property type="entry name" value="Phage_T5_Orf172_DNA-bd"/>
</dbReference>
<dbReference type="PANTHER" id="PTHR47396:SF1">
    <property type="entry name" value="ATP-DEPENDENT HELICASE IRC3-RELATED"/>
    <property type="match status" value="1"/>
</dbReference>
<dbReference type="PANTHER" id="PTHR47396">
    <property type="entry name" value="TYPE I RESTRICTION ENZYME ECOKI R PROTEIN"/>
    <property type="match status" value="1"/>
</dbReference>
<dbReference type="Pfam" id="PF00271">
    <property type="entry name" value="Helicase_C"/>
    <property type="match status" value="1"/>
</dbReference>
<dbReference type="Pfam" id="PF04851">
    <property type="entry name" value="ResIII"/>
    <property type="match status" value="1"/>
</dbReference>
<dbReference type="Pfam" id="PF10544">
    <property type="entry name" value="T5orf172"/>
    <property type="match status" value="1"/>
</dbReference>
<dbReference type="SMART" id="SM00487">
    <property type="entry name" value="DEXDc"/>
    <property type="match status" value="1"/>
</dbReference>
<dbReference type="SUPFAM" id="SSF52540">
    <property type="entry name" value="P-loop containing nucleoside triphosphate hydrolases"/>
    <property type="match status" value="1"/>
</dbReference>
<dbReference type="PROSITE" id="PS51192">
    <property type="entry name" value="HELICASE_ATP_BIND_1"/>
    <property type="match status" value="1"/>
</dbReference>
<dbReference type="PROSITE" id="PS51194">
    <property type="entry name" value="HELICASE_CTER"/>
    <property type="match status" value="1"/>
</dbReference>
<sequence length="859" mass="98495">MCAGFYVAVHPWLEAQSLHKVGHTGNLAARLHDGSYTTCFTDEWKYCFTLETSTKKDAQKIEAGVLYCAQFFRVKNKELVCLLPEKIKQLAEDVANCLDISYTLCDSPAYEMNDSTIVVEPSLPSDPLISKEKLRHLVITPVEDEEHFADDVLFFSTDETRTAIEDRLYQKEAANMGYQELRRSGRAILQMACRCGKTRVAYLILSNYLQGKVLYLVPGLSLLRQTLEKLYQYGISLKNVLLVGSDQTRIVLNHDNIEMTTNPVFIAKRIREAPSLLVIATYQSSTLLVDDFDLIISDECHRICGEWETRPFTHVLLNFKKGHRLFLTATPRYDTPLSMKNRELFGGVAFRYYLREGIEAGYVNDFELQMVAAPKLAHQPSTKEETTKQIIVKQIIMALAHLKTNITAPKMLVFTRDIKQAKELYAELVDQGVYALIAHSTLPRQVILKTFTEFCSSKEPVILLNCRLFQEGVEVPELNAVFFAAPRHSPRDIIQSICRPLNKQVQKPHATIFLPLEVNTENVCLDRFSSIIPFADALASEDPRFYEHLLNPSEVAYPINWIGAHGSVSELLQLARHAIRYGTQGKIDRLTRSERLPWKAAFAELKRTVEICCRYPKINDGFHFGGATLRFDTWYKWVIKSYLQYKNKEPSSLEPYQVSDLESLQDWTTRGVGGPYPWEESMAFLETWLAQNKGELVAIDIHQGGWIGLDATPMERLSGVLTTVSQRDGRSYGKNKKLRPKKGFMIPPQQAQDLDRIFGKHNLKWRKDRVNGFLKEDEHGNYTGEPTCIQEAYRTFKEYVKTNPEYIEKYWPGYAKGKHKHQELPHIWEKGLAPPRYKAFKDGNKQLIQRSPKKKDIKN</sequence>
<organismHost>
    <name type="scientific">Ornithodoros</name>
    <name type="common">relapsing fever ticks</name>
    <dbReference type="NCBI Taxonomy" id="6937"/>
</organismHost>
<organismHost>
    <name type="scientific">Phacochoerus aethiopicus</name>
    <name type="common">Warthog</name>
    <dbReference type="NCBI Taxonomy" id="85517"/>
</organismHost>
<organismHost>
    <name type="scientific">Phacochoerus africanus</name>
    <name type="common">Warthog</name>
    <dbReference type="NCBI Taxonomy" id="41426"/>
</organismHost>
<organismHost>
    <name type="scientific">Potamochoerus larvatus</name>
    <name type="common">Bushpig</name>
    <dbReference type="NCBI Taxonomy" id="273792"/>
</organismHost>
<organismHost>
    <name type="scientific">Sus scrofa</name>
    <name type="common">Pig</name>
    <dbReference type="NCBI Taxonomy" id="9823"/>
</organismHost>
<reference key="1">
    <citation type="submission" date="2003-03" db="EMBL/GenBank/DDBJ databases">
        <title>African swine fever virus genomes.</title>
        <authorList>
            <person name="Kutish G.F."/>
            <person name="Rock D.L."/>
        </authorList>
    </citation>
    <scope>NUCLEOTIDE SEQUENCE [LARGE SCALE GENOMIC DNA]</scope>
</reference>
<evidence type="ECO:0000255" key="1">
    <source>
        <dbReference type="PROSITE-ProRule" id="PRU00541"/>
    </source>
</evidence>
<evidence type="ECO:0000255" key="2">
    <source>
        <dbReference type="PROSITE-ProRule" id="PRU00542"/>
    </source>
</evidence>
<evidence type="ECO:0000305" key="3"/>